<proteinExistence type="inferred from homology"/>
<accession>A6VZ75</accession>
<name>LIPB_MARMS</name>
<comment type="function">
    <text evidence="1">Catalyzes the transfer of endogenously produced octanoic acid from octanoyl-acyl-carrier-protein onto the lipoyl domains of lipoate-dependent enzymes. Lipoyl-ACP can also act as a substrate although octanoyl-ACP is likely to be the physiological substrate.</text>
</comment>
<comment type="catalytic activity">
    <reaction evidence="1">
        <text>octanoyl-[ACP] + L-lysyl-[protein] = N(6)-octanoyl-L-lysyl-[protein] + holo-[ACP] + H(+)</text>
        <dbReference type="Rhea" id="RHEA:17665"/>
        <dbReference type="Rhea" id="RHEA-COMP:9636"/>
        <dbReference type="Rhea" id="RHEA-COMP:9685"/>
        <dbReference type="Rhea" id="RHEA-COMP:9752"/>
        <dbReference type="Rhea" id="RHEA-COMP:9928"/>
        <dbReference type="ChEBI" id="CHEBI:15378"/>
        <dbReference type="ChEBI" id="CHEBI:29969"/>
        <dbReference type="ChEBI" id="CHEBI:64479"/>
        <dbReference type="ChEBI" id="CHEBI:78463"/>
        <dbReference type="ChEBI" id="CHEBI:78809"/>
        <dbReference type="EC" id="2.3.1.181"/>
    </reaction>
</comment>
<comment type="pathway">
    <text evidence="1">Protein modification; protein lipoylation via endogenous pathway; protein N(6)-(lipoyl)lysine from octanoyl-[acyl-carrier-protein]: step 1/2.</text>
</comment>
<comment type="subcellular location">
    <subcellularLocation>
        <location evidence="1">Cytoplasm</location>
    </subcellularLocation>
</comment>
<comment type="miscellaneous">
    <text evidence="1">In the reaction, the free carboxyl group of octanoic acid is attached via an amide linkage to the epsilon-amino group of a specific lysine residue of lipoyl domains of lipoate-dependent enzymes.</text>
</comment>
<comment type="similarity">
    <text evidence="1">Belongs to the LipB family.</text>
</comment>
<organism>
    <name type="scientific">Marinomonas sp. (strain MWYL1)</name>
    <dbReference type="NCBI Taxonomy" id="400668"/>
    <lineage>
        <taxon>Bacteria</taxon>
        <taxon>Pseudomonadati</taxon>
        <taxon>Pseudomonadota</taxon>
        <taxon>Gammaproteobacteria</taxon>
        <taxon>Oceanospirillales</taxon>
        <taxon>Oceanospirillaceae</taxon>
        <taxon>Marinomonas</taxon>
    </lineage>
</organism>
<sequence>MELDLICRDLGVVDYAETWERMKQFTQIRSKDDADEIWLLEHPSLFTQGQAGKEEHLLAPGDIPVIQVDRGGQVTYHGPGQLVAYVMVDLKRLGIGVRDLVSVLENSVVRALALNAIEAYPKPDAPGVYVDEQKIASLGLRVRRGCSFHGLALNVDMDLTPFNRINPCGYQGLQMVDMKRLNKGVILSNVKAQLANQLAEQLGYNYPAIQQGWK</sequence>
<keyword id="KW-0012">Acyltransferase</keyword>
<keyword id="KW-0963">Cytoplasm</keyword>
<keyword id="KW-0808">Transferase</keyword>
<gene>
    <name evidence="1" type="primary">lipB</name>
    <name type="ordered locus">Mmwyl1_2842</name>
</gene>
<dbReference type="EC" id="2.3.1.181" evidence="1"/>
<dbReference type="EMBL" id="CP000749">
    <property type="protein sequence ID" value="ABR71754.1"/>
    <property type="molecule type" value="Genomic_DNA"/>
</dbReference>
<dbReference type="SMR" id="A6VZ75"/>
<dbReference type="STRING" id="400668.Mmwyl1_2842"/>
<dbReference type="KEGG" id="mmw:Mmwyl1_2842"/>
<dbReference type="eggNOG" id="COG0321">
    <property type="taxonomic scope" value="Bacteria"/>
</dbReference>
<dbReference type="HOGENOM" id="CLU_035168_3_1_6"/>
<dbReference type="OrthoDB" id="9787061at2"/>
<dbReference type="UniPathway" id="UPA00538">
    <property type="reaction ID" value="UER00592"/>
</dbReference>
<dbReference type="GO" id="GO:0005737">
    <property type="term" value="C:cytoplasm"/>
    <property type="evidence" value="ECO:0007669"/>
    <property type="project" value="UniProtKB-SubCell"/>
</dbReference>
<dbReference type="GO" id="GO:0033819">
    <property type="term" value="F:lipoyl(octanoyl) transferase activity"/>
    <property type="evidence" value="ECO:0007669"/>
    <property type="project" value="UniProtKB-EC"/>
</dbReference>
<dbReference type="GO" id="GO:0036211">
    <property type="term" value="P:protein modification process"/>
    <property type="evidence" value="ECO:0007669"/>
    <property type="project" value="InterPro"/>
</dbReference>
<dbReference type="CDD" id="cd16444">
    <property type="entry name" value="LipB"/>
    <property type="match status" value="1"/>
</dbReference>
<dbReference type="FunFam" id="3.30.930.10:FF:000020">
    <property type="entry name" value="Octanoyltransferase"/>
    <property type="match status" value="1"/>
</dbReference>
<dbReference type="Gene3D" id="3.30.930.10">
    <property type="entry name" value="Bira Bifunctional Protein, Domain 2"/>
    <property type="match status" value="1"/>
</dbReference>
<dbReference type="HAMAP" id="MF_00013">
    <property type="entry name" value="LipB"/>
    <property type="match status" value="1"/>
</dbReference>
<dbReference type="InterPro" id="IPR045864">
    <property type="entry name" value="aa-tRNA-synth_II/BPL/LPL"/>
</dbReference>
<dbReference type="InterPro" id="IPR004143">
    <property type="entry name" value="BPL_LPL_catalytic"/>
</dbReference>
<dbReference type="InterPro" id="IPR000544">
    <property type="entry name" value="Octanoyltransferase"/>
</dbReference>
<dbReference type="InterPro" id="IPR020605">
    <property type="entry name" value="Octanoyltransferase_CS"/>
</dbReference>
<dbReference type="NCBIfam" id="TIGR00214">
    <property type="entry name" value="lipB"/>
    <property type="match status" value="1"/>
</dbReference>
<dbReference type="NCBIfam" id="NF010922">
    <property type="entry name" value="PRK14342.1"/>
    <property type="match status" value="1"/>
</dbReference>
<dbReference type="PANTHER" id="PTHR10993:SF7">
    <property type="entry name" value="LIPOYLTRANSFERASE 2, MITOCHONDRIAL-RELATED"/>
    <property type="match status" value="1"/>
</dbReference>
<dbReference type="PANTHER" id="PTHR10993">
    <property type="entry name" value="OCTANOYLTRANSFERASE"/>
    <property type="match status" value="1"/>
</dbReference>
<dbReference type="Pfam" id="PF21948">
    <property type="entry name" value="LplA-B_cat"/>
    <property type="match status" value="1"/>
</dbReference>
<dbReference type="PIRSF" id="PIRSF016262">
    <property type="entry name" value="LPLase"/>
    <property type="match status" value="1"/>
</dbReference>
<dbReference type="SUPFAM" id="SSF55681">
    <property type="entry name" value="Class II aaRS and biotin synthetases"/>
    <property type="match status" value="1"/>
</dbReference>
<dbReference type="PROSITE" id="PS51733">
    <property type="entry name" value="BPL_LPL_CATALYTIC"/>
    <property type="match status" value="1"/>
</dbReference>
<dbReference type="PROSITE" id="PS01313">
    <property type="entry name" value="LIPB"/>
    <property type="match status" value="1"/>
</dbReference>
<evidence type="ECO:0000255" key="1">
    <source>
        <dbReference type="HAMAP-Rule" id="MF_00013"/>
    </source>
</evidence>
<evidence type="ECO:0000255" key="2">
    <source>
        <dbReference type="PROSITE-ProRule" id="PRU01067"/>
    </source>
</evidence>
<feature type="chain" id="PRO_1000201797" description="Octanoyltransferase">
    <location>
        <begin position="1"/>
        <end position="214"/>
    </location>
</feature>
<feature type="domain" description="BPL/LPL catalytic" evidence="2">
    <location>
        <begin position="31"/>
        <end position="206"/>
    </location>
</feature>
<feature type="active site" description="Acyl-thioester intermediate" evidence="1">
    <location>
        <position position="168"/>
    </location>
</feature>
<feature type="binding site" evidence="1">
    <location>
        <begin position="70"/>
        <end position="77"/>
    </location>
    <ligand>
        <name>substrate</name>
    </ligand>
</feature>
<feature type="binding site" evidence="1">
    <location>
        <begin position="137"/>
        <end position="139"/>
    </location>
    <ligand>
        <name>substrate</name>
    </ligand>
</feature>
<feature type="binding site" evidence="1">
    <location>
        <begin position="150"/>
        <end position="152"/>
    </location>
    <ligand>
        <name>substrate</name>
    </ligand>
</feature>
<feature type="site" description="Lowers pKa of active site Cys" evidence="1">
    <location>
        <position position="134"/>
    </location>
</feature>
<reference key="1">
    <citation type="submission" date="2007-06" db="EMBL/GenBank/DDBJ databases">
        <title>Complete sequence of Marinomonas sp. MWYL1.</title>
        <authorList>
            <consortium name="US DOE Joint Genome Institute"/>
            <person name="Copeland A."/>
            <person name="Lucas S."/>
            <person name="Lapidus A."/>
            <person name="Barry K."/>
            <person name="Glavina del Rio T."/>
            <person name="Dalin E."/>
            <person name="Tice H."/>
            <person name="Pitluck S."/>
            <person name="Kiss H."/>
            <person name="Brettin T."/>
            <person name="Bruce D."/>
            <person name="Detter J.C."/>
            <person name="Han C."/>
            <person name="Schmutz J."/>
            <person name="Larimer F."/>
            <person name="Land M."/>
            <person name="Hauser L."/>
            <person name="Kyrpides N."/>
            <person name="Kim E."/>
            <person name="Johnston A.W.B."/>
            <person name="Todd J.D."/>
            <person name="Rogers R."/>
            <person name="Wexler M."/>
            <person name="Bond P.L."/>
            <person name="Li Y."/>
            <person name="Richardson P."/>
        </authorList>
    </citation>
    <scope>NUCLEOTIDE SEQUENCE [LARGE SCALE GENOMIC DNA]</scope>
    <source>
        <strain>MWYL1</strain>
    </source>
</reference>
<protein>
    <recommendedName>
        <fullName evidence="1">Octanoyltransferase</fullName>
        <ecNumber evidence="1">2.3.1.181</ecNumber>
    </recommendedName>
    <alternativeName>
        <fullName evidence="1">Lipoate-protein ligase B</fullName>
    </alternativeName>
    <alternativeName>
        <fullName evidence="1">Lipoyl/octanoyl transferase</fullName>
    </alternativeName>
    <alternativeName>
        <fullName evidence="1">Octanoyl-[acyl-carrier-protein]-protein N-octanoyltransferase</fullName>
    </alternativeName>
</protein>